<sequence>MKKITLFFTALLCLFSTSVLAESNSIPKQCEQLFKETENLIAQAEKQPGTHIQVNKIKSKLNQSKQQILQMELATQLKSCEVGLAKLSNLKSYSE</sequence>
<organism>
    <name type="scientific">Haemophilus influenzae (strain ATCC 51907 / DSM 11121 / KW20 / Rd)</name>
    <dbReference type="NCBI Taxonomy" id="71421"/>
    <lineage>
        <taxon>Bacteria</taxon>
        <taxon>Pseudomonadati</taxon>
        <taxon>Pseudomonadota</taxon>
        <taxon>Gammaproteobacteria</taxon>
        <taxon>Pasteurellales</taxon>
        <taxon>Pasteurellaceae</taxon>
        <taxon>Haemophilus</taxon>
    </lineage>
</organism>
<dbReference type="EMBL" id="L42023">
    <property type="protein sequence ID" value="AAC21977.1"/>
    <property type="molecule type" value="Genomic_DNA"/>
</dbReference>
<dbReference type="PIR" id="I64005">
    <property type="entry name" value="I64005"/>
</dbReference>
<dbReference type="RefSeq" id="NP_438477.1">
    <property type="nucleotide sequence ID" value="NC_000907.1"/>
</dbReference>
<dbReference type="SMR" id="P43982"/>
<dbReference type="STRING" id="71421.HI_0310"/>
<dbReference type="EnsemblBacteria" id="AAC21977">
    <property type="protein sequence ID" value="AAC21977"/>
    <property type="gene ID" value="HI_0310"/>
</dbReference>
<dbReference type="KEGG" id="hin:HI_0310"/>
<dbReference type="PATRIC" id="fig|71421.8.peg.328"/>
<dbReference type="eggNOG" id="ENOG5031K0B">
    <property type="taxonomic scope" value="Bacteria"/>
</dbReference>
<dbReference type="HOGENOM" id="CLU_175535_0_0_6"/>
<dbReference type="OrthoDB" id="5690714at2"/>
<dbReference type="BioCyc" id="HINF71421:G1GJ1-328-MONOMER"/>
<dbReference type="Proteomes" id="UP000000579">
    <property type="component" value="Chromosome"/>
</dbReference>
<dbReference type="InterPro" id="IPR020493">
    <property type="entry name" value="Uncharacterised_HI0310"/>
</dbReference>
<dbReference type="Pfam" id="PF17274">
    <property type="entry name" value="DUF5339"/>
    <property type="match status" value="1"/>
</dbReference>
<accession>P43982</accession>
<protein>
    <recommendedName>
        <fullName>Uncharacterized protein HI_0310</fullName>
    </recommendedName>
</protein>
<keyword id="KW-1185">Reference proteome</keyword>
<keyword id="KW-0732">Signal</keyword>
<feature type="signal peptide" evidence="1">
    <location>
        <begin position="1"/>
        <end position="21"/>
    </location>
</feature>
<feature type="chain" id="PRO_0000013956" description="Uncharacterized protein HI_0310">
    <location>
        <begin position="22"/>
        <end position="95"/>
    </location>
</feature>
<evidence type="ECO:0000255" key="1"/>
<name>Y310_HAEIN</name>
<gene>
    <name type="ordered locus">HI_0310</name>
</gene>
<proteinExistence type="inferred from homology"/>
<reference key="1">
    <citation type="journal article" date="1995" name="Science">
        <title>Whole-genome random sequencing and assembly of Haemophilus influenzae Rd.</title>
        <authorList>
            <person name="Fleischmann R.D."/>
            <person name="Adams M.D."/>
            <person name="White O."/>
            <person name="Clayton R.A."/>
            <person name="Kirkness E.F."/>
            <person name="Kerlavage A.R."/>
            <person name="Bult C.J."/>
            <person name="Tomb J.-F."/>
            <person name="Dougherty B.A."/>
            <person name="Merrick J.M."/>
            <person name="McKenney K."/>
            <person name="Sutton G.G."/>
            <person name="FitzHugh W."/>
            <person name="Fields C.A."/>
            <person name="Gocayne J.D."/>
            <person name="Scott J.D."/>
            <person name="Shirley R."/>
            <person name="Liu L.-I."/>
            <person name="Glodek A."/>
            <person name="Kelley J.M."/>
            <person name="Weidman J.F."/>
            <person name="Phillips C.A."/>
            <person name="Spriggs T."/>
            <person name="Hedblom E."/>
            <person name="Cotton M.D."/>
            <person name="Utterback T.R."/>
            <person name="Hanna M.C."/>
            <person name="Nguyen D.T."/>
            <person name="Saudek D.M."/>
            <person name="Brandon R.C."/>
            <person name="Fine L.D."/>
            <person name="Fritchman J.L."/>
            <person name="Fuhrmann J.L."/>
            <person name="Geoghagen N.S.M."/>
            <person name="Gnehm C.L."/>
            <person name="McDonald L.A."/>
            <person name="Small K.V."/>
            <person name="Fraser C.M."/>
            <person name="Smith H.O."/>
            <person name="Venter J.C."/>
        </authorList>
    </citation>
    <scope>NUCLEOTIDE SEQUENCE [LARGE SCALE GENOMIC DNA]</scope>
    <source>
        <strain>ATCC 51907 / DSM 11121 / KW20 / Rd</strain>
    </source>
</reference>